<evidence type="ECO:0000255" key="1"/>
<evidence type="ECO:0000269" key="2">
    <source>
    </source>
</evidence>
<evidence type="ECO:0000305" key="3"/>
<evidence type="ECO:0007829" key="4">
    <source>
        <dbReference type="PDB" id="1LBU"/>
    </source>
</evidence>
<accession>P00733</accession>
<organism>
    <name type="scientific">Streptomyces albus G</name>
    <dbReference type="NCBI Taxonomy" id="1962"/>
    <lineage>
        <taxon>Bacteria</taxon>
        <taxon>Bacillati</taxon>
        <taxon>Actinomycetota</taxon>
        <taxon>Actinomycetes</taxon>
        <taxon>Kitasatosporales</taxon>
        <taxon>Streptomycetaceae</taxon>
        <taxon>Streptomyces</taxon>
    </lineage>
</organism>
<protein>
    <recommendedName>
        <fullName>Zinc D-Ala-D-Ala carboxypeptidase</fullName>
        <ecNumber>3.4.17.14</ecNumber>
    </recommendedName>
    <alternativeName>
        <fullName>D-alanyl-D-alanine carboxypeptidase</fullName>
    </alternativeName>
    <alternativeName>
        <fullName>Metallo DD-peptidase</fullName>
    </alternativeName>
    <alternativeName>
        <fullName>Zn DD-peptidase</fullName>
    </alternativeName>
</protein>
<name>CBPM_STRAL</name>
<keyword id="KW-0002">3D-structure</keyword>
<keyword id="KW-0121">Carboxypeptidase</keyword>
<keyword id="KW-0961">Cell wall biogenesis/degradation</keyword>
<keyword id="KW-0903">Direct protein sequencing</keyword>
<keyword id="KW-1015">Disulfide bond</keyword>
<keyword id="KW-0378">Hydrolase</keyword>
<keyword id="KW-0479">Metal-binding</keyword>
<keyword id="KW-0482">Metalloprotease</keyword>
<keyword id="KW-0645">Protease</keyword>
<keyword id="KW-0964">Secreted</keyword>
<keyword id="KW-0732">Signal</keyword>
<keyword id="KW-0862">Zinc</keyword>
<comment type="function">
    <text>This enzyme catalyzes carboxypeptidation and transpeptidation reactions involved in bacterial cell wall metabolism. It effectively catalyzes the transfer of the N-alpha, N-epsilon-diacetyl-L-lysyl-D-alanyl electrophilic group of the standard tripeptide substrate N-alpha,N-epsilon-diacetyl-L-lysyl-D-alanyl-D-alanine to water. It also performs a weak beta-lactamase activity, hydrolyzing penicillin into penicilloate at a very low rate.</text>
</comment>
<comment type="catalytic activity">
    <reaction>
        <text>Cleavage of the bond: (Ac)2-L-lysyl-D-alanyl-|-D-alanine.</text>
        <dbReference type="EC" id="3.4.17.14"/>
    </reaction>
</comment>
<comment type="cofactor">
    <cofactor>
        <name>Zn(2+)</name>
        <dbReference type="ChEBI" id="CHEBI:29105"/>
    </cofactor>
    <text>Binds 1 zinc ion per subunit.</text>
</comment>
<comment type="subcellular location">
    <subcellularLocation>
        <location>Secreted</location>
    </subcellularLocation>
</comment>
<comment type="PTM">
    <text>The N-terminus is partially blocked as a result of the cyclization of the first two amino acids into anhydroaspartylglycine imide.</text>
</comment>
<comment type="similarity">
    <text evidence="3">Belongs to the peptidase M15 family.</text>
</comment>
<dbReference type="EC" id="3.4.17.14"/>
<dbReference type="EMBL" id="X55794">
    <property type="protein sequence ID" value="CAA39319.1"/>
    <property type="molecule type" value="Genomic_DNA"/>
</dbReference>
<dbReference type="PIR" id="A60997">
    <property type="entry name" value="CPSMMU"/>
</dbReference>
<dbReference type="PDB" id="1LBU">
    <property type="method" value="X-ray"/>
    <property type="resolution" value="1.80 A"/>
    <property type="chains" value="A=43-255"/>
</dbReference>
<dbReference type="PDBsum" id="1LBU"/>
<dbReference type="SMR" id="P00733"/>
<dbReference type="MEROPS" id="M15.001"/>
<dbReference type="EvolutionaryTrace" id="P00733"/>
<dbReference type="GO" id="GO:0005576">
    <property type="term" value="C:extracellular region"/>
    <property type="evidence" value="ECO:0007669"/>
    <property type="project" value="UniProtKB-SubCell"/>
</dbReference>
<dbReference type="GO" id="GO:0046872">
    <property type="term" value="F:metal ion binding"/>
    <property type="evidence" value="ECO:0007669"/>
    <property type="project" value="UniProtKB-KW"/>
</dbReference>
<dbReference type="GO" id="GO:0009046">
    <property type="term" value="F:zinc D-Ala-D-Ala carboxypeptidase activity"/>
    <property type="evidence" value="ECO:0007669"/>
    <property type="project" value="UniProtKB-EC"/>
</dbReference>
<dbReference type="GO" id="GO:0071555">
    <property type="term" value="P:cell wall organization"/>
    <property type="evidence" value="ECO:0007669"/>
    <property type="project" value="UniProtKB-KW"/>
</dbReference>
<dbReference type="GO" id="GO:0006508">
    <property type="term" value="P:proteolysis"/>
    <property type="evidence" value="ECO:0007669"/>
    <property type="project" value="UniProtKB-KW"/>
</dbReference>
<dbReference type="CDD" id="cd14844">
    <property type="entry name" value="Zn-DD-carboxypeptidase_like"/>
    <property type="match status" value="1"/>
</dbReference>
<dbReference type="Gene3D" id="3.30.1380.10">
    <property type="match status" value="1"/>
</dbReference>
<dbReference type="Gene3D" id="1.10.101.10">
    <property type="entry name" value="PGBD-like superfamily/PGBD"/>
    <property type="match status" value="1"/>
</dbReference>
<dbReference type="InterPro" id="IPR009045">
    <property type="entry name" value="Hedgehog_sig/DD-Pept_Zn-bd_sf"/>
</dbReference>
<dbReference type="InterPro" id="IPR013230">
    <property type="entry name" value="Peptidase_M15A_C"/>
</dbReference>
<dbReference type="InterPro" id="IPR002477">
    <property type="entry name" value="Peptidoglycan-bd-like"/>
</dbReference>
<dbReference type="InterPro" id="IPR036365">
    <property type="entry name" value="PGBD-like_sf"/>
</dbReference>
<dbReference type="InterPro" id="IPR036366">
    <property type="entry name" value="PGBDSf"/>
</dbReference>
<dbReference type="Pfam" id="PF08291">
    <property type="entry name" value="Peptidase_M15_3"/>
    <property type="match status" value="1"/>
</dbReference>
<dbReference type="Pfam" id="PF01471">
    <property type="entry name" value="PG_binding_1"/>
    <property type="match status" value="1"/>
</dbReference>
<dbReference type="SUPFAM" id="SSF55166">
    <property type="entry name" value="Hedgehog/DD-peptidase"/>
    <property type="match status" value="1"/>
</dbReference>
<dbReference type="SUPFAM" id="SSF47090">
    <property type="entry name" value="PGBD-like"/>
    <property type="match status" value="1"/>
</dbReference>
<proteinExistence type="evidence at protein level"/>
<sequence>MRPRPIRLLLTALVGAGLAFAPVSAVAAPTATASASADVGALDGCYTWSGTLSEGSSGEAVRQLQIRVAGYPGTGAQLAIDGQFGPATKAAVQRFQSAYGLAADGIAGPATFNKIYQLQDDDCTPVNFTYAELNRCNSDWSGGKVSAATARANALVTMWKLQAMRHAMGDKPITVNGGFRSVTCNSNVGGASNSRHMYGHAADLGAGSQGFCALAQAARNHGFTEILGPGYPGHNDHTHVAGGDGRFWSAPSCGI</sequence>
<reference key="1">
    <citation type="journal article" date="1990" name="FEMS Microbiol. Lett.">
        <title>Cloning, nucleotide sequence and amplified expression of the gene encoding the extracellular metallo (Zn) DD-peptidase of Streptomyces albus G.</title>
        <authorList>
            <person name="Duez C."/>
            <person name="Lakaye B."/>
            <person name="Houba S."/>
            <person name="Dusart J."/>
            <person name="Ghuysen J.-M."/>
        </authorList>
    </citation>
    <scope>NUCLEOTIDE SEQUENCE [GENOMIC DNA]</scope>
    <source>
        <strain>G</strain>
    </source>
</reference>
<reference key="2">
    <citation type="journal article" date="1983" name="Eur. J. Biochem.">
        <title>The complete amino acid sequence of the Zn2+-containing D-alanyl-D-alanine-cleaving carboxypeptidase of streptomyces albus G.</title>
        <authorList>
            <person name="Joris B."/>
            <person name="van Beeumen J."/>
            <person name="Casagrande F."/>
            <person name="Gerday C."/>
            <person name="Frere J.-M."/>
            <person name="Ghuysen J.-M."/>
        </authorList>
    </citation>
    <scope>PROTEIN SEQUENCE OF 43-255</scope>
    <source>
        <strain>Solvifaciens</strain>
    </source>
</reference>
<reference key="3">
    <citation type="journal article" date="1982" name="Nature">
        <title>Structure of a Zn2+-containing D-alanyl-D-alanine-cleaving carboxypeptidase at 2.5-A resolution.</title>
        <authorList>
            <person name="Dideberg O."/>
            <person name="Charlier P."/>
            <person name="Dive G."/>
            <person name="Joris B."/>
            <person name="Frere J.-M."/>
            <person name="Ghuysen J.-M."/>
        </authorList>
    </citation>
    <scope>X-RAY CRYSTALLOGRAPHY (2.5 ANGSTROMS)</scope>
</reference>
<reference key="4">
    <citation type="submission" date="1996-03" db="PDB data bank">
        <authorList>
            <person name="Wery J.-P."/>
            <person name="Charlier P."/>
            <person name="Dideberg O."/>
        </authorList>
    </citation>
    <scope>X-RAY CRYSTALLOGRAPHY (1.8 ANGSTROMS)</scope>
</reference>
<feature type="signal peptide" evidence="2">
    <location>
        <begin position="1"/>
        <end position="42"/>
    </location>
</feature>
<feature type="chain" id="PRO_0000026754" description="Zinc D-Ala-D-Ala carboxypeptidase">
    <location>
        <begin position="43"/>
        <end position="255"/>
    </location>
</feature>
<feature type="active site" description="Proton donor" evidence="1">
    <location>
        <position position="234"/>
    </location>
</feature>
<feature type="binding site" evidence="1">
    <location>
        <position position="180"/>
    </location>
    <ligand>
        <name>substrate</name>
    </ligand>
</feature>
<feature type="binding site" evidence="2">
    <location>
        <position position="196"/>
    </location>
    <ligand>
        <name>Zn(2+)</name>
        <dbReference type="ChEBI" id="CHEBI:29105"/>
        <note>catalytic</note>
    </ligand>
</feature>
<feature type="binding site" evidence="2">
    <location>
        <position position="237"/>
    </location>
    <ligand>
        <name>Zn(2+)</name>
        <dbReference type="ChEBI" id="CHEBI:29105"/>
        <note>catalytic</note>
    </ligand>
</feature>
<feature type="binding site" evidence="2">
    <location>
        <position position="239"/>
    </location>
    <ligand>
        <name>Zn(2+)</name>
        <dbReference type="ChEBI" id="CHEBI:29105"/>
        <note>catalytic</note>
    </ligand>
</feature>
<feature type="modified residue" description="Blocked amino end (Asp)">
    <location>
        <position position="43"/>
    </location>
</feature>
<feature type="disulfide bond" evidence="2">
    <location>
        <begin position="45"/>
        <end position="123"/>
    </location>
</feature>
<feature type="disulfide bond" evidence="2">
    <location>
        <begin position="136"/>
        <end position="184"/>
    </location>
</feature>
<feature type="disulfide bond" evidence="2">
    <location>
        <begin position="212"/>
        <end position="253"/>
    </location>
</feature>
<feature type="sequence conflict" description="In Ref. 2; AA sequence." evidence="3" ref="2">
    <original>D</original>
    <variation>N</variation>
    <location>
        <position position="43"/>
    </location>
</feature>
<feature type="sequence conflict" description="In Ref. 2; AA sequence." evidence="3" ref="2">
    <location>
        <position position="110"/>
    </location>
</feature>
<feature type="helix" evidence="4">
    <location>
        <begin position="59"/>
        <end position="67"/>
    </location>
</feature>
<feature type="turn" evidence="4">
    <location>
        <begin position="68"/>
        <end position="70"/>
    </location>
</feature>
<feature type="strand" evidence="4">
    <location>
        <begin position="81"/>
        <end position="83"/>
    </location>
</feature>
<feature type="helix" evidence="4">
    <location>
        <begin position="86"/>
        <end position="98"/>
    </location>
</feature>
<feature type="helix" evidence="4">
    <location>
        <begin position="109"/>
        <end position="118"/>
    </location>
</feature>
<feature type="strand" evidence="4">
    <location>
        <begin position="123"/>
        <end position="125"/>
    </location>
</feature>
<feature type="turn" evidence="4">
    <location>
        <begin position="130"/>
        <end position="133"/>
    </location>
</feature>
<feature type="strand" evidence="4">
    <location>
        <begin position="142"/>
        <end position="145"/>
    </location>
</feature>
<feature type="helix" evidence="4">
    <location>
        <begin position="147"/>
        <end position="167"/>
    </location>
</feature>
<feature type="strand" evidence="4">
    <location>
        <begin position="175"/>
        <end position="177"/>
    </location>
</feature>
<feature type="helix" evidence="4">
    <location>
        <begin position="182"/>
        <end position="188"/>
    </location>
</feature>
<feature type="helix" evidence="4">
    <location>
        <begin position="195"/>
        <end position="198"/>
    </location>
</feature>
<feature type="strand" evidence="4">
    <location>
        <begin position="201"/>
        <end position="204"/>
    </location>
</feature>
<feature type="turn" evidence="4">
    <location>
        <begin position="207"/>
        <end position="209"/>
    </location>
</feature>
<feature type="helix" evidence="4">
    <location>
        <begin position="211"/>
        <end position="217"/>
    </location>
</feature>
<feature type="helix" evidence="4">
    <location>
        <begin position="218"/>
        <end position="220"/>
    </location>
</feature>
<feature type="strand" evidence="4">
    <location>
        <begin position="224"/>
        <end position="227"/>
    </location>
</feature>
<feature type="strand" evidence="4">
    <location>
        <begin position="235"/>
        <end position="241"/>
    </location>
</feature>
<feature type="strand" evidence="4">
    <location>
        <begin position="243"/>
        <end position="245"/>
    </location>
</feature>
<feature type="strand" evidence="4">
    <location>
        <begin position="247"/>
        <end position="249"/>
    </location>
</feature>
<feature type="helix" evidence="4">
    <location>
        <begin position="251"/>
        <end position="253"/>
    </location>
</feature>